<organism>
    <name type="scientific">Homo sapiens</name>
    <name type="common">Human</name>
    <dbReference type="NCBI Taxonomy" id="9606"/>
    <lineage>
        <taxon>Eukaryota</taxon>
        <taxon>Metazoa</taxon>
        <taxon>Chordata</taxon>
        <taxon>Craniata</taxon>
        <taxon>Vertebrata</taxon>
        <taxon>Euteleostomi</taxon>
        <taxon>Mammalia</taxon>
        <taxon>Eutheria</taxon>
        <taxon>Euarchontoglires</taxon>
        <taxon>Primates</taxon>
        <taxon>Haplorrhini</taxon>
        <taxon>Catarrhini</taxon>
        <taxon>Hominidae</taxon>
        <taxon>Homo</taxon>
    </lineage>
</organism>
<name>SPRR4_HUMAN</name>
<protein>
    <recommendedName>
        <fullName>Small proline-rich protein 4</fullName>
    </recommendedName>
</protein>
<proteinExistence type="evidence at protein level"/>
<feature type="chain" id="PRO_0000150006" description="Small proline-rich protein 4">
    <location>
        <begin position="1"/>
        <end position="79"/>
    </location>
</feature>
<feature type="region of interest" description="Disordered" evidence="1">
    <location>
        <begin position="1"/>
        <end position="79"/>
    </location>
</feature>
<feature type="compositionally biased region" description="Low complexity" evidence="1">
    <location>
        <begin position="1"/>
        <end position="26"/>
    </location>
</feature>
<feature type="compositionally biased region" description="Polar residues" evidence="1">
    <location>
        <begin position="66"/>
        <end position="79"/>
    </location>
</feature>
<feature type="sequence variant" id="VAR_034517" description="In dbSNP:rs16834786.">
    <original>P</original>
    <variation>S</variation>
    <location>
        <position position="45"/>
    </location>
</feature>
<keyword id="KW-0963">Cytoplasm</keyword>
<keyword id="KW-0417">Keratinization</keyword>
<keyword id="KW-1267">Proteomics identification</keyword>
<keyword id="KW-1185">Reference proteome</keyword>
<dbReference type="EMBL" id="AF335109">
    <property type="protein sequence ID" value="AAK96400.1"/>
    <property type="molecule type" value="Genomic_DNA"/>
</dbReference>
<dbReference type="EMBL" id="AL356867">
    <property type="status" value="NOT_ANNOTATED_CDS"/>
    <property type="molecule type" value="Genomic_DNA"/>
</dbReference>
<dbReference type="EMBL" id="BC069445">
    <property type="protein sequence ID" value="AAH69445.1"/>
    <property type="molecule type" value="mRNA"/>
</dbReference>
<dbReference type="EMBL" id="BC069549">
    <property type="protein sequence ID" value="AAH69549.1"/>
    <property type="molecule type" value="mRNA"/>
</dbReference>
<dbReference type="EMBL" id="BC112170">
    <property type="protein sequence ID" value="AAI12171.1"/>
    <property type="molecule type" value="mRNA"/>
</dbReference>
<dbReference type="EMBL" id="BC112172">
    <property type="protein sequence ID" value="AAI12173.1"/>
    <property type="molecule type" value="mRNA"/>
</dbReference>
<dbReference type="CCDS" id="CCDS1031.1"/>
<dbReference type="RefSeq" id="NP_775103.1">
    <property type="nucleotide sequence ID" value="NM_173080.3"/>
</dbReference>
<dbReference type="RefSeq" id="XP_016855971.1">
    <property type="nucleotide sequence ID" value="XM_017000482.3"/>
</dbReference>
<dbReference type="RefSeq" id="XP_054190717.1">
    <property type="nucleotide sequence ID" value="XM_054334742.1"/>
</dbReference>
<dbReference type="BioGRID" id="127878">
    <property type="interactions" value="6"/>
</dbReference>
<dbReference type="FunCoup" id="Q96PI1">
    <property type="interactions" value="76"/>
</dbReference>
<dbReference type="IntAct" id="Q96PI1">
    <property type="interactions" value="1"/>
</dbReference>
<dbReference type="STRING" id="9606.ENSP00000332163"/>
<dbReference type="iPTMnet" id="Q96PI1"/>
<dbReference type="PhosphoSitePlus" id="Q96PI1"/>
<dbReference type="BioMuta" id="SPRR4"/>
<dbReference type="DMDM" id="45593156"/>
<dbReference type="MassIVE" id="Q96PI1"/>
<dbReference type="PaxDb" id="9606-ENSP00000332163"/>
<dbReference type="PeptideAtlas" id="Q96PI1"/>
<dbReference type="ProteomicsDB" id="77701"/>
<dbReference type="Antibodypedia" id="56985">
    <property type="antibodies" value="16 antibodies from 8 providers"/>
</dbReference>
<dbReference type="DNASU" id="163778"/>
<dbReference type="Ensembl" id="ENST00000328051.3">
    <property type="protein sequence ID" value="ENSP00000332163.2"/>
    <property type="gene ID" value="ENSG00000184148.4"/>
</dbReference>
<dbReference type="GeneID" id="163778"/>
<dbReference type="KEGG" id="hsa:163778"/>
<dbReference type="MANE-Select" id="ENST00000328051.3">
    <property type="protein sequence ID" value="ENSP00000332163.2"/>
    <property type="RefSeq nucleotide sequence ID" value="NM_173080.3"/>
    <property type="RefSeq protein sequence ID" value="NP_775103.1"/>
</dbReference>
<dbReference type="UCSC" id="uc001fav.2">
    <property type="organism name" value="human"/>
</dbReference>
<dbReference type="AGR" id="HGNC:23173"/>
<dbReference type="CTD" id="163778"/>
<dbReference type="GeneCards" id="SPRR4"/>
<dbReference type="HGNC" id="HGNC:23173">
    <property type="gene designation" value="SPRR4"/>
</dbReference>
<dbReference type="HPA" id="ENSG00000184148">
    <property type="expression patterns" value="Tissue enriched (skin)"/>
</dbReference>
<dbReference type="MIM" id="616363">
    <property type="type" value="gene"/>
</dbReference>
<dbReference type="neXtProt" id="NX_Q96PI1"/>
<dbReference type="OpenTargets" id="ENSG00000184148"/>
<dbReference type="PharmGKB" id="PA134866393"/>
<dbReference type="VEuPathDB" id="HostDB:ENSG00000184148"/>
<dbReference type="eggNOG" id="ENOG502TDX8">
    <property type="taxonomic scope" value="Eukaryota"/>
</dbReference>
<dbReference type="GeneTree" id="ENSGT00730000111626"/>
<dbReference type="HOGENOM" id="CLU_2637484_0_0_1"/>
<dbReference type="InParanoid" id="Q96PI1"/>
<dbReference type="OMA" id="QTKDPCA"/>
<dbReference type="OrthoDB" id="9539286at2759"/>
<dbReference type="PAN-GO" id="Q96PI1">
    <property type="GO annotations" value="0 GO annotations based on evolutionary models"/>
</dbReference>
<dbReference type="PhylomeDB" id="Q96PI1"/>
<dbReference type="PathwayCommons" id="Q96PI1"/>
<dbReference type="SignaLink" id="Q96PI1"/>
<dbReference type="BioGRID-ORCS" id="163778">
    <property type="hits" value="13 hits in 1135 CRISPR screens"/>
</dbReference>
<dbReference type="ChiTaRS" id="SPRR4">
    <property type="organism name" value="human"/>
</dbReference>
<dbReference type="GenomeRNAi" id="163778"/>
<dbReference type="Pharos" id="Q96PI1">
    <property type="development level" value="Tdark"/>
</dbReference>
<dbReference type="PRO" id="PR:Q96PI1"/>
<dbReference type="Proteomes" id="UP000005640">
    <property type="component" value="Chromosome 1"/>
</dbReference>
<dbReference type="RNAct" id="Q96PI1">
    <property type="molecule type" value="protein"/>
</dbReference>
<dbReference type="Bgee" id="ENSG00000184148">
    <property type="expression patterns" value="Expressed in upper leg skin and 83 other cell types or tissues"/>
</dbReference>
<dbReference type="GO" id="GO:0005938">
    <property type="term" value="C:cell cortex"/>
    <property type="evidence" value="ECO:0007669"/>
    <property type="project" value="UniProtKB-SubCell"/>
</dbReference>
<dbReference type="GO" id="GO:0031424">
    <property type="term" value="P:keratinization"/>
    <property type="evidence" value="ECO:0007669"/>
    <property type="project" value="UniProtKB-KW"/>
</dbReference>
<dbReference type="PRINTS" id="PR00021">
    <property type="entry name" value="PRORICH"/>
</dbReference>
<sequence>MSSQQQQRQQQQCPPQRAQQQQVKQPCQPPPVKCQETCAPKTKDPCAPQVKKQCPPKGTIIPAQQKCPSAQQASKSKQK</sequence>
<reference key="1">
    <citation type="journal article" date="2001" name="J. Cell Sci.">
        <title>SPRR4, a novel cornified envelope precursor: UV-dependent epidermal expression and selective incorporation into fragile envelopes.</title>
        <authorList>
            <person name="Cabral A."/>
            <person name="Sayin A."/>
            <person name="de Winter S."/>
            <person name="Fischer D.F."/>
            <person name="Pavel S."/>
            <person name="Backendorf C."/>
        </authorList>
    </citation>
    <scope>NUCLEOTIDE SEQUENCE [GENOMIC DNA]</scope>
</reference>
<reference key="2">
    <citation type="journal article" date="2006" name="Nature">
        <title>The DNA sequence and biological annotation of human chromosome 1.</title>
        <authorList>
            <person name="Gregory S.G."/>
            <person name="Barlow K.F."/>
            <person name="McLay K.E."/>
            <person name="Kaul R."/>
            <person name="Swarbreck D."/>
            <person name="Dunham A."/>
            <person name="Scott C.E."/>
            <person name="Howe K.L."/>
            <person name="Woodfine K."/>
            <person name="Spencer C.C.A."/>
            <person name="Jones M.C."/>
            <person name="Gillson C."/>
            <person name="Searle S."/>
            <person name="Zhou Y."/>
            <person name="Kokocinski F."/>
            <person name="McDonald L."/>
            <person name="Evans R."/>
            <person name="Phillips K."/>
            <person name="Atkinson A."/>
            <person name="Cooper R."/>
            <person name="Jones C."/>
            <person name="Hall R.E."/>
            <person name="Andrews T.D."/>
            <person name="Lloyd C."/>
            <person name="Ainscough R."/>
            <person name="Almeida J.P."/>
            <person name="Ambrose K.D."/>
            <person name="Anderson F."/>
            <person name="Andrew R.W."/>
            <person name="Ashwell R.I.S."/>
            <person name="Aubin K."/>
            <person name="Babbage A.K."/>
            <person name="Bagguley C.L."/>
            <person name="Bailey J."/>
            <person name="Beasley H."/>
            <person name="Bethel G."/>
            <person name="Bird C.P."/>
            <person name="Bray-Allen S."/>
            <person name="Brown J.Y."/>
            <person name="Brown A.J."/>
            <person name="Buckley D."/>
            <person name="Burton J."/>
            <person name="Bye J."/>
            <person name="Carder C."/>
            <person name="Chapman J.C."/>
            <person name="Clark S.Y."/>
            <person name="Clarke G."/>
            <person name="Clee C."/>
            <person name="Cobley V."/>
            <person name="Collier R.E."/>
            <person name="Corby N."/>
            <person name="Coville G.J."/>
            <person name="Davies J."/>
            <person name="Deadman R."/>
            <person name="Dunn M."/>
            <person name="Earthrowl M."/>
            <person name="Ellington A.G."/>
            <person name="Errington H."/>
            <person name="Frankish A."/>
            <person name="Frankland J."/>
            <person name="French L."/>
            <person name="Garner P."/>
            <person name="Garnett J."/>
            <person name="Gay L."/>
            <person name="Ghori M.R.J."/>
            <person name="Gibson R."/>
            <person name="Gilby L.M."/>
            <person name="Gillett W."/>
            <person name="Glithero R.J."/>
            <person name="Grafham D.V."/>
            <person name="Griffiths C."/>
            <person name="Griffiths-Jones S."/>
            <person name="Grocock R."/>
            <person name="Hammond S."/>
            <person name="Harrison E.S.I."/>
            <person name="Hart E."/>
            <person name="Haugen E."/>
            <person name="Heath P.D."/>
            <person name="Holmes S."/>
            <person name="Holt K."/>
            <person name="Howden P.J."/>
            <person name="Hunt A.R."/>
            <person name="Hunt S.E."/>
            <person name="Hunter G."/>
            <person name="Isherwood J."/>
            <person name="James R."/>
            <person name="Johnson C."/>
            <person name="Johnson D."/>
            <person name="Joy A."/>
            <person name="Kay M."/>
            <person name="Kershaw J.K."/>
            <person name="Kibukawa M."/>
            <person name="Kimberley A.M."/>
            <person name="King A."/>
            <person name="Knights A.J."/>
            <person name="Lad H."/>
            <person name="Laird G."/>
            <person name="Lawlor S."/>
            <person name="Leongamornlert D.A."/>
            <person name="Lloyd D.M."/>
            <person name="Loveland J."/>
            <person name="Lovell J."/>
            <person name="Lush M.J."/>
            <person name="Lyne R."/>
            <person name="Martin S."/>
            <person name="Mashreghi-Mohammadi M."/>
            <person name="Matthews L."/>
            <person name="Matthews N.S.W."/>
            <person name="McLaren S."/>
            <person name="Milne S."/>
            <person name="Mistry S."/>
            <person name="Moore M.J.F."/>
            <person name="Nickerson T."/>
            <person name="O'Dell C.N."/>
            <person name="Oliver K."/>
            <person name="Palmeiri A."/>
            <person name="Palmer S.A."/>
            <person name="Parker A."/>
            <person name="Patel D."/>
            <person name="Pearce A.V."/>
            <person name="Peck A.I."/>
            <person name="Pelan S."/>
            <person name="Phelps K."/>
            <person name="Phillimore B.J."/>
            <person name="Plumb R."/>
            <person name="Rajan J."/>
            <person name="Raymond C."/>
            <person name="Rouse G."/>
            <person name="Saenphimmachak C."/>
            <person name="Sehra H.K."/>
            <person name="Sheridan E."/>
            <person name="Shownkeen R."/>
            <person name="Sims S."/>
            <person name="Skuce C.D."/>
            <person name="Smith M."/>
            <person name="Steward C."/>
            <person name="Subramanian S."/>
            <person name="Sycamore N."/>
            <person name="Tracey A."/>
            <person name="Tromans A."/>
            <person name="Van Helmond Z."/>
            <person name="Wall M."/>
            <person name="Wallis J.M."/>
            <person name="White S."/>
            <person name="Whitehead S.L."/>
            <person name="Wilkinson J.E."/>
            <person name="Willey D.L."/>
            <person name="Williams H."/>
            <person name="Wilming L."/>
            <person name="Wray P.W."/>
            <person name="Wu Z."/>
            <person name="Coulson A."/>
            <person name="Vaudin M."/>
            <person name="Sulston J.E."/>
            <person name="Durbin R.M."/>
            <person name="Hubbard T."/>
            <person name="Wooster R."/>
            <person name="Dunham I."/>
            <person name="Carter N.P."/>
            <person name="McVean G."/>
            <person name="Ross M.T."/>
            <person name="Harrow J."/>
            <person name="Olson M.V."/>
            <person name="Beck S."/>
            <person name="Rogers J."/>
            <person name="Bentley D.R."/>
        </authorList>
    </citation>
    <scope>NUCLEOTIDE SEQUENCE [LARGE SCALE GENOMIC DNA]</scope>
</reference>
<reference key="3">
    <citation type="journal article" date="2004" name="Genome Res.">
        <title>The status, quality, and expansion of the NIH full-length cDNA project: the Mammalian Gene Collection (MGC).</title>
        <authorList>
            <consortium name="The MGC Project Team"/>
        </authorList>
    </citation>
    <scope>NUCLEOTIDE SEQUENCE [LARGE SCALE MRNA]</scope>
</reference>
<accession>Q96PI1</accession>
<accession>Q2M1Y7</accession>
<accession>Q5T522</accession>
<evidence type="ECO:0000256" key="1">
    <source>
        <dbReference type="SAM" id="MobiDB-lite"/>
    </source>
</evidence>
<evidence type="ECO:0000305" key="2"/>
<gene>
    <name type="primary">SPRR4</name>
</gene>
<comment type="function">
    <text>Cross-linked envelope protein of keratinocytes. Involved in UV-induced cornification.</text>
</comment>
<comment type="subcellular location">
    <subcellularLocation>
        <location>Cytoplasm</location>
    </subcellularLocation>
    <subcellularLocation>
        <location>Cytoplasm</location>
        <location>Cell cortex</location>
    </subcellularLocation>
    <text>Translocates to the cell periphery of keratinocytes and is integrated into both rigid and fragile cornified envelopes.</text>
</comment>
<comment type="induction">
    <text>By UV irradiation.</text>
</comment>
<comment type="PTM">
    <text evidence="2">Cross-linked to membrane proteins by transglutaminase.</text>
</comment>
<comment type="similarity">
    <text evidence="2">Belongs to the cornifin (SPRR) family.</text>
</comment>